<name>RS16_LIMRD</name>
<gene>
    <name evidence="1" type="primary">rpsP</name>
    <name type="ordered locus">Lreu_1154</name>
</gene>
<comment type="similarity">
    <text evidence="1">Belongs to the bacterial ribosomal protein bS16 family.</text>
</comment>
<organism>
    <name type="scientific">Limosilactobacillus reuteri (strain DSM 20016)</name>
    <name type="common">Lactobacillus reuteri</name>
    <dbReference type="NCBI Taxonomy" id="557436"/>
    <lineage>
        <taxon>Bacteria</taxon>
        <taxon>Bacillati</taxon>
        <taxon>Bacillota</taxon>
        <taxon>Bacilli</taxon>
        <taxon>Lactobacillales</taxon>
        <taxon>Lactobacillaceae</taxon>
        <taxon>Limosilactobacillus</taxon>
    </lineage>
</organism>
<protein>
    <recommendedName>
        <fullName evidence="1">Small ribosomal subunit protein bS16</fullName>
    </recommendedName>
    <alternativeName>
        <fullName evidence="2">30S ribosomal protein S16</fullName>
    </alternativeName>
</protein>
<evidence type="ECO:0000255" key="1">
    <source>
        <dbReference type="HAMAP-Rule" id="MF_00385"/>
    </source>
</evidence>
<evidence type="ECO:0000305" key="2"/>
<sequence>MSVKIRLKRMGSKKRPFYRIVVADSRAPRDGRFITSVGTYNPLTTPKEVKFDEDAVMEWLQKGAQPSDTVRNMLQAAGVMKKYHEAKYAKK</sequence>
<reference key="1">
    <citation type="journal article" date="2011" name="PLoS Genet.">
        <title>The evolution of host specialization in the vertebrate gut symbiont Lactobacillus reuteri.</title>
        <authorList>
            <person name="Frese S.A."/>
            <person name="Benson A.K."/>
            <person name="Tannock G.W."/>
            <person name="Loach D.M."/>
            <person name="Kim J."/>
            <person name="Zhang M."/>
            <person name="Oh P.L."/>
            <person name="Heng N.C."/>
            <person name="Patil P.B."/>
            <person name="Juge N."/>
            <person name="Mackenzie D.A."/>
            <person name="Pearson B.M."/>
            <person name="Lapidus A."/>
            <person name="Dalin E."/>
            <person name="Tice H."/>
            <person name="Goltsman E."/>
            <person name="Land M."/>
            <person name="Hauser L."/>
            <person name="Ivanova N."/>
            <person name="Kyrpides N.C."/>
            <person name="Walter J."/>
        </authorList>
    </citation>
    <scope>NUCLEOTIDE SEQUENCE [LARGE SCALE GENOMIC DNA]</scope>
    <source>
        <strain>DSM 20016</strain>
    </source>
</reference>
<keyword id="KW-1185">Reference proteome</keyword>
<keyword id="KW-0687">Ribonucleoprotein</keyword>
<keyword id="KW-0689">Ribosomal protein</keyword>
<feature type="chain" id="PRO_1000060711" description="Small ribosomal subunit protein bS16">
    <location>
        <begin position="1"/>
        <end position="91"/>
    </location>
</feature>
<accession>A5VKN7</accession>
<dbReference type="EMBL" id="CP000705">
    <property type="protein sequence ID" value="ABQ83411.1"/>
    <property type="molecule type" value="Genomic_DNA"/>
</dbReference>
<dbReference type="RefSeq" id="WP_003663816.1">
    <property type="nucleotide sequence ID" value="NZ_AZDD01000001.1"/>
</dbReference>
<dbReference type="SMR" id="A5VKN7"/>
<dbReference type="STRING" id="557436.Lreu_1154"/>
<dbReference type="DNASU" id="5188363"/>
<dbReference type="GeneID" id="77191823"/>
<dbReference type="KEGG" id="lre:Lreu_1154"/>
<dbReference type="eggNOG" id="COG0228">
    <property type="taxonomic scope" value="Bacteria"/>
</dbReference>
<dbReference type="HOGENOM" id="CLU_100590_5_0_9"/>
<dbReference type="Proteomes" id="UP000001991">
    <property type="component" value="Chromosome"/>
</dbReference>
<dbReference type="GO" id="GO:0005737">
    <property type="term" value="C:cytoplasm"/>
    <property type="evidence" value="ECO:0007669"/>
    <property type="project" value="UniProtKB-ARBA"/>
</dbReference>
<dbReference type="GO" id="GO:0015935">
    <property type="term" value="C:small ribosomal subunit"/>
    <property type="evidence" value="ECO:0007669"/>
    <property type="project" value="TreeGrafter"/>
</dbReference>
<dbReference type="GO" id="GO:0003735">
    <property type="term" value="F:structural constituent of ribosome"/>
    <property type="evidence" value="ECO:0007669"/>
    <property type="project" value="InterPro"/>
</dbReference>
<dbReference type="GO" id="GO:0006412">
    <property type="term" value="P:translation"/>
    <property type="evidence" value="ECO:0007669"/>
    <property type="project" value="UniProtKB-UniRule"/>
</dbReference>
<dbReference type="FunFam" id="3.30.1320.10:FF:000002">
    <property type="entry name" value="30S ribosomal protein S16"/>
    <property type="match status" value="1"/>
</dbReference>
<dbReference type="Gene3D" id="3.30.1320.10">
    <property type="match status" value="1"/>
</dbReference>
<dbReference type="HAMAP" id="MF_00385">
    <property type="entry name" value="Ribosomal_bS16"/>
    <property type="match status" value="1"/>
</dbReference>
<dbReference type="InterPro" id="IPR000307">
    <property type="entry name" value="Ribosomal_bS16"/>
</dbReference>
<dbReference type="InterPro" id="IPR023803">
    <property type="entry name" value="Ribosomal_bS16_dom_sf"/>
</dbReference>
<dbReference type="NCBIfam" id="TIGR00002">
    <property type="entry name" value="S16"/>
    <property type="match status" value="1"/>
</dbReference>
<dbReference type="PANTHER" id="PTHR12919">
    <property type="entry name" value="30S RIBOSOMAL PROTEIN S16"/>
    <property type="match status" value="1"/>
</dbReference>
<dbReference type="PANTHER" id="PTHR12919:SF20">
    <property type="entry name" value="SMALL RIBOSOMAL SUBUNIT PROTEIN BS16M"/>
    <property type="match status" value="1"/>
</dbReference>
<dbReference type="Pfam" id="PF00886">
    <property type="entry name" value="Ribosomal_S16"/>
    <property type="match status" value="1"/>
</dbReference>
<dbReference type="SUPFAM" id="SSF54565">
    <property type="entry name" value="Ribosomal protein S16"/>
    <property type="match status" value="1"/>
</dbReference>
<proteinExistence type="inferred from homology"/>